<gene>
    <name type="primary">ilvH</name>
    <name type="synonym">ilvN</name>
    <name type="ordered locus">BSU28300</name>
</gene>
<evidence type="ECO:0000250" key="1"/>
<evidence type="ECO:0000255" key="2">
    <source>
        <dbReference type="PROSITE-ProRule" id="PRU01007"/>
    </source>
</evidence>
<evidence type="ECO:0000305" key="3"/>
<comment type="catalytic activity">
    <reaction>
        <text>2 pyruvate + H(+) = (2S)-2-acetolactate + CO2</text>
        <dbReference type="Rhea" id="RHEA:25249"/>
        <dbReference type="ChEBI" id="CHEBI:15361"/>
        <dbReference type="ChEBI" id="CHEBI:15378"/>
        <dbReference type="ChEBI" id="CHEBI:16526"/>
        <dbReference type="ChEBI" id="CHEBI:58476"/>
        <dbReference type="EC" id="2.2.1.6"/>
    </reaction>
</comment>
<comment type="pathway">
    <text>Amino-acid biosynthesis; L-isoleucine biosynthesis; L-isoleucine from 2-oxobutanoate: step 1/4.</text>
</comment>
<comment type="pathway">
    <text>Amino-acid biosynthesis; L-valine biosynthesis; L-valine from pyruvate: step 1/4.</text>
</comment>
<comment type="subunit">
    <text evidence="1">Dimer of large and small chains.</text>
</comment>
<comment type="similarity">
    <text evidence="3">Belongs to the acetolactate synthase small subunit family.</text>
</comment>
<keyword id="KW-0028">Amino-acid biosynthesis</keyword>
<keyword id="KW-0100">Branched-chain amino acid biosynthesis</keyword>
<keyword id="KW-1185">Reference proteome</keyword>
<keyword id="KW-0808">Transferase</keyword>
<organism>
    <name type="scientific">Bacillus subtilis (strain 168)</name>
    <dbReference type="NCBI Taxonomy" id="224308"/>
    <lineage>
        <taxon>Bacteria</taxon>
        <taxon>Bacillati</taxon>
        <taxon>Bacillota</taxon>
        <taxon>Bacilli</taxon>
        <taxon>Bacillales</taxon>
        <taxon>Bacillaceae</taxon>
        <taxon>Bacillus</taxon>
    </lineage>
</organism>
<proteinExistence type="inferred from homology"/>
<feature type="chain" id="PRO_0000151406" description="Acetolactate synthase small subunit">
    <location>
        <begin position="1"/>
        <end position="172"/>
    </location>
</feature>
<feature type="domain" description="ACT" evidence="2">
    <location>
        <begin position="4"/>
        <end position="79"/>
    </location>
</feature>
<feature type="sequence conflict" description="In Ref. 1; AAA22547 and 2; CAA99562." evidence="3" ref="1 2">
    <original>QQKASSNKTISIV</original>
    <variation>SKRRHPIKQYLLYKT</variation>
    <location>
        <begin position="160"/>
        <end position="172"/>
    </location>
</feature>
<name>ILVH_BACSU</name>
<protein>
    <recommendedName>
        <fullName>Acetolactate synthase small subunit</fullName>
        <ecNumber>2.2.1.6</ecNumber>
    </recommendedName>
    <alternativeName>
        <fullName>Acetohydroxy-acid synthase small subunit</fullName>
        <shortName>AHAS</shortName>
        <shortName>ALS</shortName>
    </alternativeName>
</protein>
<dbReference type="EC" id="2.2.1.6"/>
<dbReference type="EMBL" id="L03181">
    <property type="protein sequence ID" value="AAA22547.1"/>
    <property type="molecule type" value="Genomic_DNA"/>
</dbReference>
<dbReference type="EMBL" id="Z75208">
    <property type="protein sequence ID" value="CAA99562.1"/>
    <property type="molecule type" value="Genomic_DNA"/>
</dbReference>
<dbReference type="EMBL" id="AL009126">
    <property type="protein sequence ID" value="CAB14790.2"/>
    <property type="molecule type" value="Genomic_DNA"/>
</dbReference>
<dbReference type="PIR" id="E69644">
    <property type="entry name" value="E69644"/>
</dbReference>
<dbReference type="RefSeq" id="NP_390708.2">
    <property type="nucleotide sequence ID" value="NC_000964.3"/>
</dbReference>
<dbReference type="RefSeq" id="WP_004399096.1">
    <property type="nucleotide sequence ID" value="NZ_OZ025638.1"/>
</dbReference>
<dbReference type="SMR" id="P37252"/>
<dbReference type="FunCoup" id="P37252">
    <property type="interactions" value="505"/>
</dbReference>
<dbReference type="STRING" id="224308.BSU28300"/>
<dbReference type="PaxDb" id="224308-BSU28300"/>
<dbReference type="EnsemblBacteria" id="CAB14790">
    <property type="protein sequence ID" value="CAB14790"/>
    <property type="gene ID" value="BSU_28300"/>
</dbReference>
<dbReference type="GeneID" id="937477"/>
<dbReference type="KEGG" id="bsu:BSU28300"/>
<dbReference type="PATRIC" id="fig|224308.179.peg.3074"/>
<dbReference type="eggNOG" id="COG0440">
    <property type="taxonomic scope" value="Bacteria"/>
</dbReference>
<dbReference type="InParanoid" id="P37252"/>
<dbReference type="OrthoDB" id="9787365at2"/>
<dbReference type="PhylomeDB" id="P37252"/>
<dbReference type="BioCyc" id="BSUB:BSU28300-MONOMER"/>
<dbReference type="UniPathway" id="UPA00047">
    <property type="reaction ID" value="UER00055"/>
</dbReference>
<dbReference type="UniPathway" id="UPA00049">
    <property type="reaction ID" value="UER00059"/>
</dbReference>
<dbReference type="Proteomes" id="UP000001570">
    <property type="component" value="Chromosome"/>
</dbReference>
<dbReference type="GO" id="GO:0005829">
    <property type="term" value="C:cytosol"/>
    <property type="evidence" value="ECO:0000318"/>
    <property type="project" value="GO_Central"/>
</dbReference>
<dbReference type="GO" id="GO:0003984">
    <property type="term" value="F:acetolactate synthase activity"/>
    <property type="evidence" value="ECO:0000318"/>
    <property type="project" value="GO_Central"/>
</dbReference>
<dbReference type="GO" id="GO:1990610">
    <property type="term" value="F:acetolactate synthase regulator activity"/>
    <property type="evidence" value="ECO:0007669"/>
    <property type="project" value="InterPro"/>
</dbReference>
<dbReference type="GO" id="GO:0009097">
    <property type="term" value="P:isoleucine biosynthetic process"/>
    <property type="evidence" value="ECO:0000318"/>
    <property type="project" value="GO_Central"/>
</dbReference>
<dbReference type="GO" id="GO:0009099">
    <property type="term" value="P:L-valine biosynthetic process"/>
    <property type="evidence" value="ECO:0000318"/>
    <property type="project" value="GO_Central"/>
</dbReference>
<dbReference type="CDD" id="cd04878">
    <property type="entry name" value="ACT_AHAS"/>
    <property type="match status" value="1"/>
</dbReference>
<dbReference type="FunFam" id="3.30.70.1150:FF:000001">
    <property type="entry name" value="Acetolactate synthase small subunit"/>
    <property type="match status" value="1"/>
</dbReference>
<dbReference type="FunFam" id="3.30.70.260:FF:000001">
    <property type="entry name" value="Acetolactate synthase, small subunit"/>
    <property type="match status" value="1"/>
</dbReference>
<dbReference type="Gene3D" id="3.30.70.260">
    <property type="match status" value="1"/>
</dbReference>
<dbReference type="Gene3D" id="3.30.70.1150">
    <property type="entry name" value="ACT-like. Chain A, domain 2"/>
    <property type="match status" value="1"/>
</dbReference>
<dbReference type="InterPro" id="IPR004789">
    <property type="entry name" value="Acetalactate_synth_ssu"/>
</dbReference>
<dbReference type="InterPro" id="IPR027271">
    <property type="entry name" value="Acetolactate_synth/TF_NikR_C"/>
</dbReference>
<dbReference type="InterPro" id="IPR019455">
    <property type="entry name" value="Acetolactate_synth_ssu_C"/>
</dbReference>
<dbReference type="InterPro" id="IPR045865">
    <property type="entry name" value="ACT-like_dom_sf"/>
</dbReference>
<dbReference type="InterPro" id="IPR002912">
    <property type="entry name" value="ACT_dom"/>
</dbReference>
<dbReference type="InterPro" id="IPR039557">
    <property type="entry name" value="AHAS_ACT"/>
</dbReference>
<dbReference type="InterPro" id="IPR054480">
    <property type="entry name" value="AHAS_small-like_ACT"/>
</dbReference>
<dbReference type="NCBIfam" id="TIGR00119">
    <property type="entry name" value="acolac_sm"/>
    <property type="match status" value="1"/>
</dbReference>
<dbReference type="NCBIfam" id="NF008864">
    <property type="entry name" value="PRK11895.1"/>
    <property type="match status" value="1"/>
</dbReference>
<dbReference type="PANTHER" id="PTHR30239">
    <property type="entry name" value="ACETOLACTATE SYNTHASE SMALL SUBUNIT"/>
    <property type="match status" value="1"/>
</dbReference>
<dbReference type="PANTHER" id="PTHR30239:SF0">
    <property type="entry name" value="ACETOLACTATE SYNTHASE SMALL SUBUNIT 1, CHLOROPLASTIC"/>
    <property type="match status" value="1"/>
</dbReference>
<dbReference type="Pfam" id="PF22629">
    <property type="entry name" value="ACT_AHAS_ss"/>
    <property type="match status" value="1"/>
</dbReference>
<dbReference type="Pfam" id="PF10369">
    <property type="entry name" value="ALS_ss_C"/>
    <property type="match status" value="1"/>
</dbReference>
<dbReference type="SUPFAM" id="SSF55021">
    <property type="entry name" value="ACT-like"/>
    <property type="match status" value="2"/>
</dbReference>
<dbReference type="PROSITE" id="PS51671">
    <property type="entry name" value="ACT"/>
    <property type="match status" value="1"/>
</dbReference>
<sequence length="172" mass="18925">MKRIITLTVVNRSGVLNRITGLFTKRHYNIESITVGHTETAGVSRITFVVHVEGENDVEQLTKQLNKQIDVLKVTDITNQSIVQRELALIKVVSAPSTRTEINGIIEPFRASVVDVSRDSIVVQVTGESNKIEALIELLKPYGIKEIARTGTTAFARGTQQKASSNKTISIV</sequence>
<accession>P37252</accession>
<reference key="1">
    <citation type="submission" date="1992-09" db="EMBL/GenBank/DDBJ databases">
        <title>The ilv-leu operon of Bacillus subtilis: sequences of the ilvB, ilvN and ilvC genes, and the control of transcription.</title>
        <authorList>
            <person name="Vandeyar M.A."/>
            <person name="Vander Horn P.B."/>
            <person name="Rafael J.A."/>
            <person name="Grandoni J.A."/>
            <person name="Zahler S.A."/>
        </authorList>
    </citation>
    <scope>NUCLEOTIDE SEQUENCE [GENOMIC DNA]</scope>
</reference>
<reference key="2">
    <citation type="journal article" date="1996" name="Microbiology">
        <title>The dnaB-pheA (256 degrees-240 degrees) region of the Bacillus subtilis chromosome containing genes responsible for stress responses, the utilization of plant cell walls and primary metabolism.</title>
        <authorList>
            <person name="Wipat A."/>
            <person name="Carter N."/>
            <person name="Brignell C.S."/>
            <person name="Guy J.B."/>
            <person name="Piper K."/>
            <person name="Sanders J."/>
            <person name="Emmerson P.T."/>
            <person name="Harwood C.R."/>
        </authorList>
    </citation>
    <scope>NUCLEOTIDE SEQUENCE [GENOMIC DNA]</scope>
    <source>
        <strain>168</strain>
    </source>
</reference>
<reference key="3">
    <citation type="journal article" date="1997" name="Nature">
        <title>The complete genome sequence of the Gram-positive bacterium Bacillus subtilis.</title>
        <authorList>
            <person name="Kunst F."/>
            <person name="Ogasawara N."/>
            <person name="Moszer I."/>
            <person name="Albertini A.M."/>
            <person name="Alloni G."/>
            <person name="Azevedo V."/>
            <person name="Bertero M.G."/>
            <person name="Bessieres P."/>
            <person name="Bolotin A."/>
            <person name="Borchert S."/>
            <person name="Borriss R."/>
            <person name="Boursier L."/>
            <person name="Brans A."/>
            <person name="Braun M."/>
            <person name="Brignell S.C."/>
            <person name="Bron S."/>
            <person name="Brouillet S."/>
            <person name="Bruschi C.V."/>
            <person name="Caldwell B."/>
            <person name="Capuano V."/>
            <person name="Carter N.M."/>
            <person name="Choi S.-K."/>
            <person name="Codani J.-J."/>
            <person name="Connerton I.F."/>
            <person name="Cummings N.J."/>
            <person name="Daniel R.A."/>
            <person name="Denizot F."/>
            <person name="Devine K.M."/>
            <person name="Duesterhoeft A."/>
            <person name="Ehrlich S.D."/>
            <person name="Emmerson P.T."/>
            <person name="Entian K.-D."/>
            <person name="Errington J."/>
            <person name="Fabret C."/>
            <person name="Ferrari E."/>
            <person name="Foulger D."/>
            <person name="Fritz C."/>
            <person name="Fujita M."/>
            <person name="Fujita Y."/>
            <person name="Fuma S."/>
            <person name="Galizzi A."/>
            <person name="Galleron N."/>
            <person name="Ghim S.-Y."/>
            <person name="Glaser P."/>
            <person name="Goffeau A."/>
            <person name="Golightly E.J."/>
            <person name="Grandi G."/>
            <person name="Guiseppi G."/>
            <person name="Guy B.J."/>
            <person name="Haga K."/>
            <person name="Haiech J."/>
            <person name="Harwood C.R."/>
            <person name="Henaut A."/>
            <person name="Hilbert H."/>
            <person name="Holsappel S."/>
            <person name="Hosono S."/>
            <person name="Hullo M.-F."/>
            <person name="Itaya M."/>
            <person name="Jones L.-M."/>
            <person name="Joris B."/>
            <person name="Karamata D."/>
            <person name="Kasahara Y."/>
            <person name="Klaerr-Blanchard M."/>
            <person name="Klein C."/>
            <person name="Kobayashi Y."/>
            <person name="Koetter P."/>
            <person name="Koningstein G."/>
            <person name="Krogh S."/>
            <person name="Kumano M."/>
            <person name="Kurita K."/>
            <person name="Lapidus A."/>
            <person name="Lardinois S."/>
            <person name="Lauber J."/>
            <person name="Lazarevic V."/>
            <person name="Lee S.-M."/>
            <person name="Levine A."/>
            <person name="Liu H."/>
            <person name="Masuda S."/>
            <person name="Mauel C."/>
            <person name="Medigue C."/>
            <person name="Medina N."/>
            <person name="Mellado R.P."/>
            <person name="Mizuno M."/>
            <person name="Moestl D."/>
            <person name="Nakai S."/>
            <person name="Noback M."/>
            <person name="Noone D."/>
            <person name="O'Reilly M."/>
            <person name="Ogawa K."/>
            <person name="Ogiwara A."/>
            <person name="Oudega B."/>
            <person name="Park S.-H."/>
            <person name="Parro V."/>
            <person name="Pohl T.M."/>
            <person name="Portetelle D."/>
            <person name="Porwollik S."/>
            <person name="Prescott A.M."/>
            <person name="Presecan E."/>
            <person name="Pujic P."/>
            <person name="Purnelle B."/>
            <person name="Rapoport G."/>
            <person name="Rey M."/>
            <person name="Reynolds S."/>
            <person name="Rieger M."/>
            <person name="Rivolta C."/>
            <person name="Rocha E."/>
            <person name="Roche B."/>
            <person name="Rose M."/>
            <person name="Sadaie Y."/>
            <person name="Sato T."/>
            <person name="Scanlan E."/>
            <person name="Schleich S."/>
            <person name="Schroeter R."/>
            <person name="Scoffone F."/>
            <person name="Sekiguchi J."/>
            <person name="Sekowska A."/>
            <person name="Seror S.J."/>
            <person name="Serror P."/>
            <person name="Shin B.-S."/>
            <person name="Soldo B."/>
            <person name="Sorokin A."/>
            <person name="Tacconi E."/>
            <person name="Takagi T."/>
            <person name="Takahashi H."/>
            <person name="Takemaru K."/>
            <person name="Takeuchi M."/>
            <person name="Tamakoshi A."/>
            <person name="Tanaka T."/>
            <person name="Terpstra P."/>
            <person name="Tognoni A."/>
            <person name="Tosato V."/>
            <person name="Uchiyama S."/>
            <person name="Vandenbol M."/>
            <person name="Vannier F."/>
            <person name="Vassarotti A."/>
            <person name="Viari A."/>
            <person name="Wambutt R."/>
            <person name="Wedler E."/>
            <person name="Wedler H."/>
            <person name="Weitzenegger T."/>
            <person name="Winters P."/>
            <person name="Wipat A."/>
            <person name="Yamamoto H."/>
            <person name="Yamane K."/>
            <person name="Yasumoto K."/>
            <person name="Yata K."/>
            <person name="Yoshida K."/>
            <person name="Yoshikawa H.-F."/>
            <person name="Zumstein E."/>
            <person name="Yoshikawa H."/>
            <person name="Danchin A."/>
        </authorList>
    </citation>
    <scope>NUCLEOTIDE SEQUENCE [LARGE SCALE GENOMIC DNA]</scope>
    <source>
        <strain>168</strain>
    </source>
</reference>
<reference key="4">
    <citation type="journal article" date="2009" name="Microbiology">
        <title>From a consortium sequence to a unified sequence: the Bacillus subtilis 168 reference genome a decade later.</title>
        <authorList>
            <person name="Barbe V."/>
            <person name="Cruveiller S."/>
            <person name="Kunst F."/>
            <person name="Lenoble P."/>
            <person name="Meurice G."/>
            <person name="Sekowska A."/>
            <person name="Vallenet D."/>
            <person name="Wang T."/>
            <person name="Moszer I."/>
            <person name="Medigue C."/>
            <person name="Danchin A."/>
        </authorList>
    </citation>
    <scope>SEQUENCE REVISION TO C-TERMINUS</scope>
</reference>